<reference key="1">
    <citation type="journal article" date="2004" name="Nat. Genet.">
        <title>Complete sequencing and characterization of 21,243 full-length human cDNAs.</title>
        <authorList>
            <person name="Ota T."/>
            <person name="Suzuki Y."/>
            <person name="Nishikawa T."/>
            <person name="Otsuki T."/>
            <person name="Sugiyama T."/>
            <person name="Irie R."/>
            <person name="Wakamatsu A."/>
            <person name="Hayashi K."/>
            <person name="Sato H."/>
            <person name="Nagai K."/>
            <person name="Kimura K."/>
            <person name="Makita H."/>
            <person name="Sekine M."/>
            <person name="Obayashi M."/>
            <person name="Nishi T."/>
            <person name="Shibahara T."/>
            <person name="Tanaka T."/>
            <person name="Ishii S."/>
            <person name="Yamamoto J."/>
            <person name="Saito K."/>
            <person name="Kawai Y."/>
            <person name="Isono Y."/>
            <person name="Nakamura Y."/>
            <person name="Nagahari K."/>
            <person name="Murakami K."/>
            <person name="Yasuda T."/>
            <person name="Iwayanagi T."/>
            <person name="Wagatsuma M."/>
            <person name="Shiratori A."/>
            <person name="Sudo H."/>
            <person name="Hosoiri T."/>
            <person name="Kaku Y."/>
            <person name="Kodaira H."/>
            <person name="Kondo H."/>
            <person name="Sugawara M."/>
            <person name="Takahashi M."/>
            <person name="Kanda K."/>
            <person name="Yokoi T."/>
            <person name="Furuya T."/>
            <person name="Kikkawa E."/>
            <person name="Omura Y."/>
            <person name="Abe K."/>
            <person name="Kamihara K."/>
            <person name="Katsuta N."/>
            <person name="Sato K."/>
            <person name="Tanikawa M."/>
            <person name="Yamazaki M."/>
            <person name="Ninomiya K."/>
            <person name="Ishibashi T."/>
            <person name="Yamashita H."/>
            <person name="Murakawa K."/>
            <person name="Fujimori K."/>
            <person name="Tanai H."/>
            <person name="Kimata M."/>
            <person name="Watanabe M."/>
            <person name="Hiraoka S."/>
            <person name="Chiba Y."/>
            <person name="Ishida S."/>
            <person name="Ono Y."/>
            <person name="Takiguchi S."/>
            <person name="Watanabe S."/>
            <person name="Yosida M."/>
            <person name="Hotuta T."/>
            <person name="Kusano J."/>
            <person name="Kanehori K."/>
            <person name="Takahashi-Fujii A."/>
            <person name="Hara H."/>
            <person name="Tanase T.-O."/>
            <person name="Nomura Y."/>
            <person name="Togiya S."/>
            <person name="Komai F."/>
            <person name="Hara R."/>
            <person name="Takeuchi K."/>
            <person name="Arita M."/>
            <person name="Imose N."/>
            <person name="Musashino K."/>
            <person name="Yuuki H."/>
            <person name="Oshima A."/>
            <person name="Sasaki N."/>
            <person name="Aotsuka S."/>
            <person name="Yoshikawa Y."/>
            <person name="Matsunawa H."/>
            <person name="Ichihara T."/>
            <person name="Shiohata N."/>
            <person name="Sano S."/>
            <person name="Moriya S."/>
            <person name="Momiyama H."/>
            <person name="Satoh N."/>
            <person name="Takami S."/>
            <person name="Terashima Y."/>
            <person name="Suzuki O."/>
            <person name="Nakagawa S."/>
            <person name="Senoh A."/>
            <person name="Mizoguchi H."/>
            <person name="Goto Y."/>
            <person name="Shimizu F."/>
            <person name="Wakebe H."/>
            <person name="Hishigaki H."/>
            <person name="Watanabe T."/>
            <person name="Sugiyama A."/>
            <person name="Takemoto M."/>
            <person name="Kawakami B."/>
            <person name="Yamazaki M."/>
            <person name="Watanabe K."/>
            <person name="Kumagai A."/>
            <person name="Itakura S."/>
            <person name="Fukuzumi Y."/>
            <person name="Fujimori Y."/>
            <person name="Komiyama M."/>
            <person name="Tashiro H."/>
            <person name="Tanigami A."/>
            <person name="Fujiwara T."/>
            <person name="Ono T."/>
            <person name="Yamada K."/>
            <person name="Fujii Y."/>
            <person name="Ozaki K."/>
            <person name="Hirao M."/>
            <person name="Ohmori Y."/>
            <person name="Kawabata A."/>
            <person name="Hikiji T."/>
            <person name="Kobatake N."/>
            <person name="Inagaki H."/>
            <person name="Ikema Y."/>
            <person name="Okamoto S."/>
            <person name="Okitani R."/>
            <person name="Kawakami T."/>
            <person name="Noguchi S."/>
            <person name="Itoh T."/>
            <person name="Shigeta K."/>
            <person name="Senba T."/>
            <person name="Matsumura K."/>
            <person name="Nakajima Y."/>
            <person name="Mizuno T."/>
            <person name="Morinaga M."/>
            <person name="Sasaki M."/>
            <person name="Togashi T."/>
            <person name="Oyama M."/>
            <person name="Hata H."/>
            <person name="Watanabe M."/>
            <person name="Komatsu T."/>
            <person name="Mizushima-Sugano J."/>
            <person name="Satoh T."/>
            <person name="Shirai Y."/>
            <person name="Takahashi Y."/>
            <person name="Nakagawa K."/>
            <person name="Okumura K."/>
            <person name="Nagase T."/>
            <person name="Nomura N."/>
            <person name="Kikuchi H."/>
            <person name="Masuho Y."/>
            <person name="Yamashita R."/>
            <person name="Nakai K."/>
            <person name="Yada T."/>
            <person name="Nakamura Y."/>
            <person name="Ohara O."/>
            <person name="Isogai T."/>
            <person name="Sugano S."/>
        </authorList>
    </citation>
    <scope>NUCLEOTIDE SEQUENCE [LARGE SCALE MRNA]</scope>
    <source>
        <tissue>Corpus callosum</tissue>
    </source>
</reference>
<reference key="2">
    <citation type="journal article" date="2004" name="Nature">
        <title>DNA sequence and analysis of human chromosome 9.</title>
        <authorList>
            <person name="Humphray S.J."/>
            <person name="Oliver K."/>
            <person name="Hunt A.R."/>
            <person name="Plumb R.W."/>
            <person name="Loveland J.E."/>
            <person name="Howe K.L."/>
            <person name="Andrews T.D."/>
            <person name="Searle S."/>
            <person name="Hunt S.E."/>
            <person name="Scott C.E."/>
            <person name="Jones M.C."/>
            <person name="Ainscough R."/>
            <person name="Almeida J.P."/>
            <person name="Ambrose K.D."/>
            <person name="Ashwell R.I.S."/>
            <person name="Babbage A.K."/>
            <person name="Babbage S."/>
            <person name="Bagguley C.L."/>
            <person name="Bailey J."/>
            <person name="Banerjee R."/>
            <person name="Barker D.J."/>
            <person name="Barlow K.F."/>
            <person name="Bates K."/>
            <person name="Beasley H."/>
            <person name="Beasley O."/>
            <person name="Bird C.P."/>
            <person name="Bray-Allen S."/>
            <person name="Brown A.J."/>
            <person name="Brown J.Y."/>
            <person name="Burford D."/>
            <person name="Burrill W."/>
            <person name="Burton J."/>
            <person name="Carder C."/>
            <person name="Carter N.P."/>
            <person name="Chapman J.C."/>
            <person name="Chen Y."/>
            <person name="Clarke G."/>
            <person name="Clark S.Y."/>
            <person name="Clee C.M."/>
            <person name="Clegg S."/>
            <person name="Collier R.E."/>
            <person name="Corby N."/>
            <person name="Crosier M."/>
            <person name="Cummings A.T."/>
            <person name="Davies J."/>
            <person name="Dhami P."/>
            <person name="Dunn M."/>
            <person name="Dutta I."/>
            <person name="Dyer L.W."/>
            <person name="Earthrowl M.E."/>
            <person name="Faulkner L."/>
            <person name="Fleming C.J."/>
            <person name="Frankish A."/>
            <person name="Frankland J.A."/>
            <person name="French L."/>
            <person name="Fricker D.G."/>
            <person name="Garner P."/>
            <person name="Garnett J."/>
            <person name="Ghori J."/>
            <person name="Gilbert J.G.R."/>
            <person name="Glison C."/>
            <person name="Grafham D.V."/>
            <person name="Gribble S."/>
            <person name="Griffiths C."/>
            <person name="Griffiths-Jones S."/>
            <person name="Grocock R."/>
            <person name="Guy J."/>
            <person name="Hall R.E."/>
            <person name="Hammond S."/>
            <person name="Harley J.L."/>
            <person name="Harrison E.S.I."/>
            <person name="Hart E.A."/>
            <person name="Heath P.D."/>
            <person name="Henderson C.D."/>
            <person name="Hopkins B.L."/>
            <person name="Howard P.J."/>
            <person name="Howden P.J."/>
            <person name="Huckle E."/>
            <person name="Johnson C."/>
            <person name="Johnson D."/>
            <person name="Joy A.A."/>
            <person name="Kay M."/>
            <person name="Keenan S."/>
            <person name="Kershaw J.K."/>
            <person name="Kimberley A.M."/>
            <person name="King A."/>
            <person name="Knights A."/>
            <person name="Laird G.K."/>
            <person name="Langford C."/>
            <person name="Lawlor S."/>
            <person name="Leongamornlert D.A."/>
            <person name="Leversha M."/>
            <person name="Lloyd C."/>
            <person name="Lloyd D.M."/>
            <person name="Lovell J."/>
            <person name="Martin S."/>
            <person name="Mashreghi-Mohammadi M."/>
            <person name="Matthews L."/>
            <person name="McLaren S."/>
            <person name="McLay K.E."/>
            <person name="McMurray A."/>
            <person name="Milne S."/>
            <person name="Nickerson T."/>
            <person name="Nisbett J."/>
            <person name="Nordsiek G."/>
            <person name="Pearce A.V."/>
            <person name="Peck A.I."/>
            <person name="Porter K.M."/>
            <person name="Pandian R."/>
            <person name="Pelan S."/>
            <person name="Phillimore B."/>
            <person name="Povey S."/>
            <person name="Ramsey Y."/>
            <person name="Rand V."/>
            <person name="Scharfe M."/>
            <person name="Sehra H.K."/>
            <person name="Shownkeen R."/>
            <person name="Sims S.K."/>
            <person name="Skuce C.D."/>
            <person name="Smith M."/>
            <person name="Steward C.A."/>
            <person name="Swarbreck D."/>
            <person name="Sycamore N."/>
            <person name="Tester J."/>
            <person name="Thorpe A."/>
            <person name="Tracey A."/>
            <person name="Tromans A."/>
            <person name="Thomas D.W."/>
            <person name="Wall M."/>
            <person name="Wallis J.M."/>
            <person name="West A.P."/>
            <person name="Whitehead S.L."/>
            <person name="Willey D.L."/>
            <person name="Williams S.A."/>
            <person name="Wilming L."/>
            <person name="Wray P.W."/>
            <person name="Young L."/>
            <person name="Ashurst J.L."/>
            <person name="Coulson A."/>
            <person name="Blocker H."/>
            <person name="Durbin R.M."/>
            <person name="Sulston J.E."/>
            <person name="Hubbard T."/>
            <person name="Jackson M.J."/>
            <person name="Bentley D.R."/>
            <person name="Beck S."/>
            <person name="Rogers J."/>
            <person name="Dunham I."/>
        </authorList>
    </citation>
    <scope>NUCLEOTIDE SEQUENCE [LARGE SCALE GENOMIC DNA]</scope>
</reference>
<reference key="3">
    <citation type="submission" date="2005-07" db="EMBL/GenBank/DDBJ databases">
        <authorList>
            <person name="Mural R.J."/>
            <person name="Istrail S."/>
            <person name="Sutton G.G."/>
            <person name="Florea L."/>
            <person name="Halpern A.L."/>
            <person name="Mobarry C.M."/>
            <person name="Lippert R."/>
            <person name="Walenz B."/>
            <person name="Shatkay H."/>
            <person name="Dew I."/>
            <person name="Miller J.R."/>
            <person name="Flanigan M.J."/>
            <person name="Edwards N.J."/>
            <person name="Bolanos R."/>
            <person name="Fasulo D."/>
            <person name="Halldorsson B.V."/>
            <person name="Hannenhalli S."/>
            <person name="Turner R."/>
            <person name="Yooseph S."/>
            <person name="Lu F."/>
            <person name="Nusskern D.R."/>
            <person name="Shue B.C."/>
            <person name="Zheng X.H."/>
            <person name="Zhong F."/>
            <person name="Delcher A.L."/>
            <person name="Huson D.H."/>
            <person name="Kravitz S.A."/>
            <person name="Mouchard L."/>
            <person name="Reinert K."/>
            <person name="Remington K.A."/>
            <person name="Clark A.G."/>
            <person name="Waterman M.S."/>
            <person name="Eichler E.E."/>
            <person name="Adams M.D."/>
            <person name="Hunkapiller M.W."/>
            <person name="Myers E.W."/>
            <person name="Venter J.C."/>
        </authorList>
    </citation>
    <scope>NUCLEOTIDE SEQUENCE [LARGE SCALE GENOMIC DNA]</scope>
</reference>
<reference key="4">
    <citation type="journal article" date="2003" name="Genome Res.">
        <title>The secreted protein discovery initiative (SPDI), a large-scale effort to identify novel human secreted and transmembrane proteins: a bioinformatics assessment.</title>
        <authorList>
            <person name="Clark H.F."/>
            <person name="Gurney A.L."/>
            <person name="Abaya E."/>
            <person name="Baker K."/>
            <person name="Baldwin D.T."/>
            <person name="Brush J."/>
            <person name="Chen J."/>
            <person name="Chow B."/>
            <person name="Chui C."/>
            <person name="Crowley C."/>
            <person name="Currell B."/>
            <person name="Deuel B."/>
            <person name="Dowd P."/>
            <person name="Eaton D."/>
            <person name="Foster J.S."/>
            <person name="Grimaldi C."/>
            <person name="Gu Q."/>
            <person name="Hass P.E."/>
            <person name="Heldens S."/>
            <person name="Huang A."/>
            <person name="Kim H.S."/>
            <person name="Klimowski L."/>
            <person name="Jin Y."/>
            <person name="Johnson S."/>
            <person name="Lee J."/>
            <person name="Lewis L."/>
            <person name="Liao D."/>
            <person name="Mark M.R."/>
            <person name="Robbie E."/>
            <person name="Sanchez C."/>
            <person name="Schoenfeld J."/>
            <person name="Seshagiri S."/>
            <person name="Simmons L."/>
            <person name="Singh J."/>
            <person name="Smith V."/>
            <person name="Stinson J."/>
            <person name="Vagts A."/>
            <person name="Vandlen R.L."/>
            <person name="Watanabe C."/>
            <person name="Wieand D."/>
            <person name="Woods K."/>
            <person name="Xie M.-H."/>
            <person name="Yansura D.G."/>
            <person name="Yi S."/>
            <person name="Yu G."/>
            <person name="Yuan J."/>
            <person name="Zhang M."/>
            <person name="Zhang Z."/>
            <person name="Goddard A.D."/>
            <person name="Wood W.I."/>
            <person name="Godowski P.J."/>
            <person name="Gray A.M."/>
        </authorList>
    </citation>
    <scope>NUCLEOTIDE SEQUENCE [LARGE SCALE MRNA] OF 1-267</scope>
</reference>
<reference key="5">
    <citation type="journal article" date="1998" name="Genomics">
        <title>Identification of high-molecular-weight proteins with multiple EGF-like motifs by motif-trap screening.</title>
        <authorList>
            <person name="Nakayama M."/>
            <person name="Nakajima D."/>
            <person name="Nagase T."/>
            <person name="Nomura N."/>
            <person name="Seki N."/>
            <person name="Ohara O."/>
        </authorList>
    </citation>
    <scope>NUCLEOTIDE SEQUENCE [MRNA] OF 228-602</scope>
    <source>
        <tissue>Brain</tissue>
    </source>
</reference>
<dbReference type="EMBL" id="AK295380">
    <property type="protein sequence ID" value="BAH12051.1"/>
    <property type="molecule type" value="mRNA"/>
</dbReference>
<dbReference type="EMBL" id="AL138836">
    <property type="status" value="NOT_ANNOTATED_CDS"/>
    <property type="molecule type" value="Genomic_DNA"/>
</dbReference>
<dbReference type="EMBL" id="CH471090">
    <property type="protein sequence ID" value="EAW87465.1"/>
    <property type="molecule type" value="Genomic_DNA"/>
</dbReference>
<dbReference type="EMBL" id="AY358370">
    <property type="protein sequence ID" value="AAQ88736.1"/>
    <property type="status" value="ALT_SEQ"/>
    <property type="molecule type" value="mRNA"/>
</dbReference>
<dbReference type="EMBL" id="AB011542">
    <property type="protein sequence ID" value="BAA32470.1"/>
    <property type="molecule type" value="mRNA"/>
</dbReference>
<dbReference type="CCDS" id="CCDS48010.2"/>
<dbReference type="RefSeq" id="NP_001073966.2">
    <property type="nucleotide sequence ID" value="NM_001080497.3"/>
</dbReference>
<dbReference type="SMR" id="Q9H1U4"/>
<dbReference type="BioGRID" id="108275">
    <property type="interactions" value="53"/>
</dbReference>
<dbReference type="FunCoup" id="Q9H1U4">
    <property type="interactions" value="135"/>
</dbReference>
<dbReference type="IntAct" id="Q9H1U4">
    <property type="interactions" value="5"/>
</dbReference>
<dbReference type="STRING" id="9606.ENSP00000363040"/>
<dbReference type="GlyCosmos" id="Q9H1U4">
    <property type="glycosylation" value="12 sites, 1 glycan"/>
</dbReference>
<dbReference type="GlyGen" id="Q9H1U4">
    <property type="glycosylation" value="21 sites, 2 O-linked glycans (3 sites)"/>
</dbReference>
<dbReference type="iPTMnet" id="Q9H1U4"/>
<dbReference type="PhosphoSitePlus" id="Q9H1U4"/>
<dbReference type="BioMuta" id="MEGF9"/>
<dbReference type="DMDM" id="116242627"/>
<dbReference type="jPOST" id="Q9H1U4"/>
<dbReference type="MassIVE" id="Q9H1U4"/>
<dbReference type="PaxDb" id="9606-ENSP00000363040"/>
<dbReference type="PeptideAtlas" id="Q9H1U4"/>
<dbReference type="ProteomicsDB" id="80447"/>
<dbReference type="Antibodypedia" id="2992">
    <property type="antibodies" value="146 antibodies from 24 providers"/>
</dbReference>
<dbReference type="DNASU" id="1955"/>
<dbReference type="Ensembl" id="ENST00000373930.4">
    <property type="protein sequence ID" value="ENSP00000363040.3"/>
    <property type="gene ID" value="ENSG00000106780.9"/>
</dbReference>
<dbReference type="GeneID" id="1955"/>
<dbReference type="KEGG" id="hsa:1955"/>
<dbReference type="MANE-Select" id="ENST00000373930.4">
    <property type="protein sequence ID" value="ENSP00000363040.3"/>
    <property type="RefSeq nucleotide sequence ID" value="NM_001080497.3"/>
    <property type="RefSeq protein sequence ID" value="NP_001073966.2"/>
</dbReference>
<dbReference type="UCSC" id="uc022bms.2">
    <property type="organism name" value="human"/>
</dbReference>
<dbReference type="AGR" id="HGNC:3234"/>
<dbReference type="CTD" id="1955"/>
<dbReference type="DisGeNET" id="1955"/>
<dbReference type="GeneCards" id="MEGF9"/>
<dbReference type="HGNC" id="HGNC:3234">
    <property type="gene designation" value="MEGF9"/>
</dbReference>
<dbReference type="HPA" id="ENSG00000106780">
    <property type="expression patterns" value="Tissue enhanced (retina)"/>
</dbReference>
<dbReference type="MIM" id="604268">
    <property type="type" value="gene"/>
</dbReference>
<dbReference type="neXtProt" id="NX_Q9H1U4"/>
<dbReference type="OpenTargets" id="ENSG00000106780"/>
<dbReference type="VEuPathDB" id="HostDB:ENSG00000106780"/>
<dbReference type="eggNOG" id="KOG0994">
    <property type="taxonomic scope" value="Eukaryota"/>
</dbReference>
<dbReference type="GeneTree" id="ENSGT00940000161177"/>
<dbReference type="HOGENOM" id="CLU_031674_2_0_1"/>
<dbReference type="InParanoid" id="Q9H1U4"/>
<dbReference type="OMA" id="GTCHTDS"/>
<dbReference type="OrthoDB" id="19138at2759"/>
<dbReference type="PAN-GO" id="Q9H1U4">
    <property type="GO annotations" value="5 GO annotations based on evolutionary models"/>
</dbReference>
<dbReference type="PhylomeDB" id="Q9H1U4"/>
<dbReference type="PathwayCommons" id="Q9H1U4"/>
<dbReference type="BioGRID-ORCS" id="1955">
    <property type="hits" value="10 hits in 1152 CRISPR screens"/>
</dbReference>
<dbReference type="ChiTaRS" id="MEGF9">
    <property type="organism name" value="human"/>
</dbReference>
<dbReference type="GenomeRNAi" id="1955"/>
<dbReference type="Pharos" id="Q9H1U4">
    <property type="development level" value="Tdark"/>
</dbReference>
<dbReference type="PRO" id="PR:Q9H1U4"/>
<dbReference type="Proteomes" id="UP000005640">
    <property type="component" value="Chromosome 9"/>
</dbReference>
<dbReference type="RNAct" id="Q9H1U4">
    <property type="molecule type" value="protein"/>
</dbReference>
<dbReference type="Bgee" id="ENSG00000106780">
    <property type="expression patterns" value="Expressed in olfactory bulb and 204 other cell types or tissues"/>
</dbReference>
<dbReference type="GO" id="GO:0005604">
    <property type="term" value="C:basement membrane"/>
    <property type="evidence" value="ECO:0007669"/>
    <property type="project" value="Ensembl"/>
</dbReference>
<dbReference type="GO" id="GO:0016020">
    <property type="term" value="C:membrane"/>
    <property type="evidence" value="ECO:0007669"/>
    <property type="project" value="UniProtKB-SubCell"/>
</dbReference>
<dbReference type="CDD" id="cd00055">
    <property type="entry name" value="EGF_Lam"/>
    <property type="match status" value="5"/>
</dbReference>
<dbReference type="FunFam" id="2.10.25.10:FF:000188">
    <property type="entry name" value="Laminin subunit gamma 2"/>
    <property type="match status" value="1"/>
</dbReference>
<dbReference type="FunFam" id="2.10.25.10:FF:000720">
    <property type="entry name" value="Multiple EGF like domains 9"/>
    <property type="match status" value="1"/>
</dbReference>
<dbReference type="FunFam" id="2.10.25.10:FF:000589">
    <property type="entry name" value="Multiple epidermal growth factor-like domains 9"/>
    <property type="match status" value="1"/>
</dbReference>
<dbReference type="FunFam" id="2.10.25.10:FF:000599">
    <property type="entry name" value="multiple epidermal growth factor-like domains protein 9"/>
    <property type="match status" value="1"/>
</dbReference>
<dbReference type="FunFam" id="2.10.25.10:FF:000743">
    <property type="entry name" value="Si:dkey-220k22.1"/>
    <property type="match status" value="1"/>
</dbReference>
<dbReference type="Gene3D" id="2.10.25.10">
    <property type="entry name" value="Laminin"/>
    <property type="match status" value="5"/>
</dbReference>
<dbReference type="InterPro" id="IPR000742">
    <property type="entry name" value="EGF-like_dom"/>
</dbReference>
<dbReference type="InterPro" id="IPR050440">
    <property type="entry name" value="Laminin/Netrin_ECM"/>
</dbReference>
<dbReference type="InterPro" id="IPR002049">
    <property type="entry name" value="LE_dom"/>
</dbReference>
<dbReference type="InterPro" id="IPR056863">
    <property type="entry name" value="LMN_ATRN_NET-like_EGF"/>
</dbReference>
<dbReference type="PANTHER" id="PTHR10574:SF409">
    <property type="entry name" value="LAMININ SUBUNIT ALPHA-1"/>
    <property type="match status" value="1"/>
</dbReference>
<dbReference type="PANTHER" id="PTHR10574">
    <property type="entry name" value="NETRIN/LAMININ-RELATED"/>
    <property type="match status" value="1"/>
</dbReference>
<dbReference type="Pfam" id="PF00053">
    <property type="entry name" value="EGF_laminin"/>
    <property type="match status" value="4"/>
</dbReference>
<dbReference type="Pfam" id="PF24973">
    <property type="entry name" value="EGF_LMN_ATRN"/>
    <property type="match status" value="1"/>
</dbReference>
<dbReference type="PRINTS" id="PR00011">
    <property type="entry name" value="EGFLAMININ"/>
</dbReference>
<dbReference type="SMART" id="SM00181">
    <property type="entry name" value="EGF"/>
    <property type="match status" value="5"/>
</dbReference>
<dbReference type="SMART" id="SM00180">
    <property type="entry name" value="EGF_Lam"/>
    <property type="match status" value="5"/>
</dbReference>
<dbReference type="SUPFAM" id="SSF57196">
    <property type="entry name" value="EGF/Laminin"/>
    <property type="match status" value="4"/>
</dbReference>
<dbReference type="PROSITE" id="PS00022">
    <property type="entry name" value="EGF_1"/>
    <property type="match status" value="2"/>
</dbReference>
<dbReference type="PROSITE" id="PS01186">
    <property type="entry name" value="EGF_2"/>
    <property type="match status" value="1"/>
</dbReference>
<dbReference type="PROSITE" id="PS01248">
    <property type="entry name" value="EGF_LAM_1"/>
    <property type="match status" value="5"/>
</dbReference>
<dbReference type="PROSITE" id="PS50027">
    <property type="entry name" value="EGF_LAM_2"/>
    <property type="match status" value="5"/>
</dbReference>
<sequence>MNGGAERAMRSLPSLGGLALLCCAAAAAAAAVASAASAGNVTGGGGAAGQVDASPGPGLRGEPSHPFPRATAPTAQAPRTGPPRATVHRPLAATSPAQSPETTPLWATAGPSSTTFQAPLGPSPTTPPAAERTSTTSQAPTRPAPTTLSTTTGPAPTTPVATTVPAPTTPRTPTPDLPSSSNSSVLPTPPATEAPSSPPPEYVCNCSVVGSLNVNRCNQTTGQCECRPGYQGLHCETCKEGFYLNYTSGLCQPCDCSPHGALSIPCNSSGKCQCKVGVIGSICDRCQDGYYGFSKNGCLPCQCNNRSASCDALTGACLNCQENSKGNHCEECKEGFYQSPDATKECLRCPCSAVTSTGSCSIKSSELEPECDQCKDGYIGPNCNKCENGYYNFDSICRKCQCHGHVDPVKTPKICKPESGECINCLHNTTGFWCENCLEGYVHDLEGNCIKKEVILPTPEGSTILVSNASLTTSVPTPVINSTFTPTTLQTIFSVSTSENSTSALADVSWTQFNIIILTVIIIVVVLLMGFVGAVYMYREYQNRKLNAPFWTIELKEDNISFSSYHDSIPNADVSGLLEDDGNEVAPNGQLTLTTPIHNYKA</sequence>
<accession>Q9H1U4</accession>
<accession>B7Z315</accession>
<accession>O75098</accession>
<keyword id="KW-1015">Disulfide bond</keyword>
<keyword id="KW-0325">Glycoprotein</keyword>
<keyword id="KW-0424">Laminin EGF-like domain</keyword>
<keyword id="KW-0472">Membrane</keyword>
<keyword id="KW-1267">Proteomics identification</keyword>
<keyword id="KW-1185">Reference proteome</keyword>
<keyword id="KW-0677">Repeat</keyword>
<keyword id="KW-0732">Signal</keyword>
<keyword id="KW-0812">Transmembrane</keyword>
<keyword id="KW-1133">Transmembrane helix</keyword>
<feature type="signal peptide" evidence="1">
    <location>
        <begin position="1"/>
        <end position="30"/>
    </location>
</feature>
<feature type="chain" id="PRO_0000007526" description="Multiple epidermal growth factor-like domains protein 9">
    <location>
        <begin position="31"/>
        <end position="602"/>
    </location>
</feature>
<feature type="topological domain" description="Extracellular" evidence="1">
    <location>
        <begin position="31"/>
        <end position="514"/>
    </location>
</feature>
<feature type="transmembrane region" description="Helical" evidence="1">
    <location>
        <begin position="515"/>
        <end position="535"/>
    </location>
</feature>
<feature type="topological domain" description="Cytoplasmic" evidence="1">
    <location>
        <begin position="536"/>
        <end position="602"/>
    </location>
</feature>
<feature type="domain" description="Laminin EGF-like 1" evidence="2">
    <location>
        <begin position="204"/>
        <end position="253"/>
    </location>
</feature>
<feature type="domain" description="Laminin EGF-like 2" evidence="2">
    <location>
        <begin position="254"/>
        <end position="300"/>
    </location>
</feature>
<feature type="domain" description="Laminin EGF-like 3" evidence="2">
    <location>
        <begin position="301"/>
        <end position="348"/>
    </location>
</feature>
<feature type="domain" description="Laminin EGF-like 4" evidence="2">
    <location>
        <begin position="349"/>
        <end position="399"/>
    </location>
</feature>
<feature type="domain" description="Laminin EGF-like 5" evidence="2">
    <location>
        <begin position="400"/>
        <end position="451"/>
    </location>
</feature>
<feature type="region of interest" description="Disordered" evidence="3">
    <location>
        <begin position="38"/>
        <end position="199"/>
    </location>
</feature>
<feature type="compositionally biased region" description="Low complexity" evidence="3">
    <location>
        <begin position="68"/>
        <end position="85"/>
    </location>
</feature>
<feature type="compositionally biased region" description="Low complexity" evidence="3">
    <location>
        <begin position="139"/>
        <end position="166"/>
    </location>
</feature>
<feature type="compositionally biased region" description="Pro residues" evidence="3">
    <location>
        <begin position="167"/>
        <end position="176"/>
    </location>
</feature>
<feature type="compositionally biased region" description="Pro residues" evidence="3">
    <location>
        <begin position="187"/>
        <end position="199"/>
    </location>
</feature>
<feature type="glycosylation site" description="N-linked (GlcNAc...) asparagine" evidence="1">
    <location>
        <position position="40"/>
    </location>
</feature>
<feature type="glycosylation site" description="N-linked (GlcNAc...) asparagine" evidence="1">
    <location>
        <position position="182"/>
    </location>
</feature>
<feature type="glycosylation site" description="N-linked (GlcNAc...) asparagine" evidence="1">
    <location>
        <position position="205"/>
    </location>
</feature>
<feature type="glycosylation site" description="N-linked (GlcNAc...) asparagine" evidence="1">
    <location>
        <position position="218"/>
    </location>
</feature>
<feature type="glycosylation site" description="N-linked (GlcNAc...) asparagine" evidence="1">
    <location>
        <position position="245"/>
    </location>
</feature>
<feature type="glycosylation site" description="N-linked (GlcNAc...) asparagine" evidence="1">
    <location>
        <position position="267"/>
    </location>
</feature>
<feature type="glycosylation site" description="N-linked (GlcNAc...) asparagine" evidence="1">
    <location>
        <position position="305"/>
    </location>
</feature>
<feature type="glycosylation site" description="N-linked (GlcNAc...) asparagine" evidence="1">
    <location>
        <position position="428"/>
    </location>
</feature>
<feature type="glycosylation site" description="N-linked (GlcNAc...) asparagine" evidence="1">
    <location>
        <position position="468"/>
    </location>
</feature>
<feature type="glycosylation site" description="N-linked (GlcNAc...) asparagine" evidence="1">
    <location>
        <position position="481"/>
    </location>
</feature>
<feature type="glycosylation site" description="N-linked (GlcNAc...) asparagine" evidence="1">
    <location>
        <position position="500"/>
    </location>
</feature>
<feature type="disulfide bond" evidence="2">
    <location>
        <begin position="204"/>
        <end position="217"/>
    </location>
</feature>
<feature type="disulfide bond" evidence="2">
    <location>
        <begin position="206"/>
        <end position="224"/>
    </location>
</feature>
<feature type="disulfide bond" evidence="2">
    <location>
        <begin position="226"/>
        <end position="235"/>
    </location>
</feature>
<feature type="disulfide bond" evidence="2">
    <location>
        <begin position="238"/>
        <end position="251"/>
    </location>
</feature>
<feature type="disulfide bond" evidence="2">
    <location>
        <begin position="254"/>
        <end position="266"/>
    </location>
</feature>
<feature type="disulfide bond" evidence="2">
    <location>
        <begin position="256"/>
        <end position="272"/>
    </location>
</feature>
<feature type="disulfide bond" evidence="2">
    <location>
        <begin position="274"/>
        <end position="283"/>
    </location>
</feature>
<feature type="disulfide bond" evidence="2">
    <location>
        <begin position="286"/>
        <end position="298"/>
    </location>
</feature>
<feature type="disulfide bond" evidence="2">
    <location>
        <begin position="301"/>
        <end position="310"/>
    </location>
</feature>
<feature type="disulfide bond" evidence="2">
    <location>
        <begin position="303"/>
        <end position="317"/>
    </location>
</feature>
<feature type="disulfide bond" evidence="2">
    <location>
        <begin position="320"/>
        <end position="329"/>
    </location>
</feature>
<feature type="disulfide bond" evidence="2">
    <location>
        <begin position="332"/>
        <end position="346"/>
    </location>
</feature>
<feature type="disulfide bond" evidence="2">
    <location>
        <begin position="349"/>
        <end position="360"/>
    </location>
</feature>
<feature type="disulfide bond" evidence="2">
    <location>
        <begin position="351"/>
        <end position="371"/>
    </location>
</feature>
<feature type="disulfide bond" evidence="2">
    <location>
        <begin position="374"/>
        <end position="383"/>
    </location>
</feature>
<feature type="disulfide bond" evidence="2">
    <location>
        <begin position="386"/>
        <end position="397"/>
    </location>
</feature>
<feature type="disulfide bond" evidence="2">
    <location>
        <begin position="400"/>
        <end position="415"/>
    </location>
</feature>
<feature type="disulfide bond" evidence="2">
    <location>
        <begin position="402"/>
        <end position="422"/>
    </location>
</feature>
<feature type="disulfide bond" evidence="2">
    <location>
        <begin position="425"/>
        <end position="434"/>
    </location>
</feature>
<feature type="disulfide bond" evidence="2">
    <location>
        <begin position="437"/>
        <end position="449"/>
    </location>
</feature>
<gene>
    <name type="primary">MEGF9</name>
    <name type="synonym">EGFL5</name>
    <name type="synonym">KIAA0818</name>
    <name type="ORF">UNQ671/PRO1305</name>
</gene>
<protein>
    <recommendedName>
        <fullName>Multiple epidermal growth factor-like domains protein 9</fullName>
        <shortName>Multiple EGF-like domains protein 9</shortName>
    </recommendedName>
    <alternativeName>
        <fullName>Epidermal growth factor-like protein 5</fullName>
        <shortName>EGF-like protein 5</shortName>
    </alternativeName>
</protein>
<evidence type="ECO:0000255" key="1"/>
<evidence type="ECO:0000255" key="2">
    <source>
        <dbReference type="PROSITE-ProRule" id="PRU00460"/>
    </source>
</evidence>
<evidence type="ECO:0000256" key="3">
    <source>
        <dbReference type="SAM" id="MobiDB-lite"/>
    </source>
</evidence>
<evidence type="ECO:0000305" key="4"/>
<proteinExistence type="evidence at protein level"/>
<comment type="subcellular location">
    <subcellularLocation>
        <location evidence="4">Membrane</location>
        <topology evidence="4">Single-pass type I membrane protein</topology>
    </subcellularLocation>
</comment>
<comment type="polymorphism">
    <text evidence="4">The poly-Ala stretch (positions 24 to 31) may be polymorphic and varies from 6 to 8 Ala residues.</text>
</comment>
<comment type="caution">
    <text evidence="4">It is uncertain whether Met-1 or Met-9 is the initiator.</text>
</comment>
<comment type="sequence caution" evidence="4">
    <conflict type="miscellaneous discrepancy">
        <sequence resource="EMBL-CDS" id="AAQ88736"/>
    </conflict>
    <text>Intron retention.</text>
</comment>
<organism>
    <name type="scientific">Homo sapiens</name>
    <name type="common">Human</name>
    <dbReference type="NCBI Taxonomy" id="9606"/>
    <lineage>
        <taxon>Eukaryota</taxon>
        <taxon>Metazoa</taxon>
        <taxon>Chordata</taxon>
        <taxon>Craniata</taxon>
        <taxon>Vertebrata</taxon>
        <taxon>Euteleostomi</taxon>
        <taxon>Mammalia</taxon>
        <taxon>Eutheria</taxon>
        <taxon>Euarchontoglires</taxon>
        <taxon>Primates</taxon>
        <taxon>Haplorrhini</taxon>
        <taxon>Catarrhini</taxon>
        <taxon>Hominidae</taxon>
        <taxon>Homo</taxon>
    </lineage>
</organism>
<name>MEGF9_HUMAN</name>